<proteinExistence type="evidence at protein level"/>
<reference key="1">
    <citation type="journal article" date="1998" name="Infect. Immun.">
        <title>DNA sequencing and analysis of the low-Ca2+-response plasmid pCD1 of Yersinia pestis KIM5.</title>
        <authorList>
            <person name="Perry R.D."/>
            <person name="Straley S.C."/>
            <person name="Fetherston J.D."/>
            <person name="Rose D.J."/>
            <person name="Gregor J."/>
            <person name="Blattner F.R."/>
        </authorList>
    </citation>
    <scope>NUCLEOTIDE SEQUENCE [GENOMIC DNA]</scope>
    <source>
        <strain>KIM5 / Biovar Mediaevalis</strain>
    </source>
</reference>
<reference key="2">
    <citation type="journal article" date="1998" name="J. Bacteriol.">
        <title>Structural organization of virulence-associated plasmids of Yersinia pestis.</title>
        <authorList>
            <person name="Hu P."/>
            <person name="Elliott J."/>
            <person name="McCready P."/>
            <person name="Skowronski E."/>
            <person name="Garnes J."/>
            <person name="Kobayashi A."/>
            <person name="Brubaker R.R."/>
            <person name="Garcia E."/>
        </authorList>
    </citation>
    <scope>NUCLEOTIDE SEQUENCE [GENOMIC DNA]</scope>
    <source>
        <strain>KIM5 / Biovar Mediaevalis</strain>
    </source>
</reference>
<reference key="3">
    <citation type="journal article" date="2001" name="Nature">
        <title>Genome sequence of Yersinia pestis, the causative agent of plague.</title>
        <authorList>
            <person name="Parkhill J."/>
            <person name="Wren B.W."/>
            <person name="Thomson N.R."/>
            <person name="Titball R.W."/>
            <person name="Holden M.T.G."/>
            <person name="Prentice M.B."/>
            <person name="Sebaihia M."/>
            <person name="James K.D."/>
            <person name="Churcher C.M."/>
            <person name="Mungall K.L."/>
            <person name="Baker S."/>
            <person name="Basham D."/>
            <person name="Bentley S.D."/>
            <person name="Brooks K."/>
            <person name="Cerdeno-Tarraga A.-M."/>
            <person name="Chillingworth T."/>
            <person name="Cronin A."/>
            <person name="Davies R.M."/>
            <person name="Davis P."/>
            <person name="Dougan G."/>
            <person name="Feltwell T."/>
            <person name="Hamlin N."/>
            <person name="Holroyd S."/>
            <person name="Jagels K."/>
            <person name="Karlyshev A.V."/>
            <person name="Leather S."/>
            <person name="Moule S."/>
            <person name="Oyston P.C.F."/>
            <person name="Quail M.A."/>
            <person name="Rutherford K.M."/>
            <person name="Simmonds M."/>
            <person name="Skelton J."/>
            <person name="Stevens K."/>
            <person name="Whitehead S."/>
            <person name="Barrell B.G."/>
        </authorList>
    </citation>
    <scope>NUCLEOTIDE SEQUENCE [LARGE SCALE GENOMIC DNA]</scope>
    <source>
        <strain>CO-92 / Biovar Orientalis</strain>
    </source>
</reference>
<reference key="4">
    <citation type="journal article" date="2004" name="DNA Res.">
        <title>Complete genome sequence of Yersinia pestis strain 91001, an isolate avirulent to humans.</title>
        <authorList>
            <person name="Song Y."/>
            <person name="Tong Z."/>
            <person name="Wang J."/>
            <person name="Wang L."/>
            <person name="Guo Z."/>
            <person name="Han Y."/>
            <person name="Zhang J."/>
            <person name="Pei D."/>
            <person name="Zhou D."/>
            <person name="Qin H."/>
            <person name="Pang X."/>
            <person name="Han Y."/>
            <person name="Zhai J."/>
            <person name="Li M."/>
            <person name="Cui B."/>
            <person name="Qi Z."/>
            <person name="Jin L."/>
            <person name="Dai R."/>
            <person name="Chen F."/>
            <person name="Li S."/>
            <person name="Ye C."/>
            <person name="Du Z."/>
            <person name="Lin W."/>
            <person name="Wang J."/>
            <person name="Yu J."/>
            <person name="Yang H."/>
            <person name="Wang J."/>
            <person name="Huang P."/>
            <person name="Yang R."/>
        </authorList>
    </citation>
    <scope>NUCLEOTIDE SEQUENCE [LARGE SCALE GENOMIC DNA]</scope>
    <source>
        <strain>91001 / Biovar Mediaevalis</strain>
    </source>
</reference>
<evidence type="ECO:0000255" key="1"/>
<evidence type="ECO:0000255" key="2">
    <source>
        <dbReference type="PROSITE-ProRule" id="PRU00159"/>
    </source>
</evidence>
<evidence type="ECO:0000255" key="3">
    <source>
        <dbReference type="PROSITE-ProRule" id="PRU10027"/>
    </source>
</evidence>
<evidence type="ECO:0000305" key="4"/>
<feature type="signal peptide" evidence="1">
    <location>
        <begin position="1"/>
        <end status="unknown"/>
    </location>
</feature>
<feature type="chain" id="PRO_0000024391" description="Protein kinase YpkA">
    <location>
        <begin status="unknown"/>
        <end position="732"/>
    </location>
</feature>
<feature type="domain" description="Protein kinase" evidence="2">
    <location>
        <begin position="136"/>
        <end position="408"/>
    </location>
</feature>
<feature type="active site" description="Proton acceptor" evidence="2 3">
    <location>
        <position position="270"/>
    </location>
</feature>
<feature type="binding site" evidence="2">
    <location>
        <begin position="142"/>
        <end position="150"/>
    </location>
    <ligand>
        <name>ATP</name>
        <dbReference type="ChEBI" id="CHEBI:30616"/>
    </ligand>
</feature>
<feature type="binding site" evidence="2">
    <location>
        <position position="163"/>
    </location>
    <ligand>
        <name>ATP</name>
        <dbReference type="ChEBI" id="CHEBI:30616"/>
    </ligand>
</feature>
<feature type="sequence conflict" description="In Ref. 1 and 2." evidence="4" ref="1 2">
    <original>R</original>
    <variation>Q</variation>
    <location>
        <position position="647"/>
    </location>
</feature>
<geneLocation type="plasmid">
    <name>pCD1</name>
</geneLocation>
<protein>
    <recommendedName>
        <fullName>Protein kinase YpkA</fullName>
        <shortName>Protein kinase A</shortName>
        <ecNumber>2.7.11.1</ecNumber>
    </recommendedName>
    <alternativeName>
        <fullName>Targeted effector protein kinase</fullName>
    </alternativeName>
</protein>
<name>YPKA_YERPE</name>
<sequence length="732" mass="81761">MKSVKIMGTMPPSISLAKAHERISQHWQNPVGELNIGGKRYRIIDNQVLRLNPHSGFSLFREGVGKIFSGKMFNFSIARNLTDTLHAAQKTTSQELRSDIPNALSNLFGAKPQTELPLGWKGEPLSGAPDLEGMRVAETDKFAEGESHISIIETKDKQRLVAKIERSIAEGHLFAELEAYKHIYKTAGKHPNLANVHGMAVVPYGNRKEEALLMDEVDGWRCSDTLRTLADSWKQGKINSEAYWGTIKFIAHRLLDVTNHLAKAGVVHNDIKPGNVVFDRASGEPVVIDLGLHSRSGEQPKGFTESFKAPELGVGNLGASEKSDVFLVVSTLLHCIEGFEKNPEIKPNQGLRFITSEPAHVMDENGYPIHRPGIAGVETAYTRFITDILGVSADSRPDSNEARLHEFLSDGTIDEESAKQILKDTLTGEMSPLSTDVRRITPKKLRELSDLLRTHLSSAATKQLDMGGVLSDLDTMLVALDKAEREGGVDKDQLKSFNSLILKTYRVIEDYVKGREGDTKNSSTEVSPYHRSNFMLSIVEPSLQRIQKHLDQTHSFSDIGSLVRAHKHLETLLEVLVTLSQQGQPVSSETYGFLNRLTEAKITLSQQLNTLQQQQESAKAQLSILINRSGSWADVARQSLQRFDSTRPVVKFGTEQYTAIHRQMMAAHAAITLQEVSEFTDDMRNFTVDSIPLLIQLGRSSLMDEHLVEQREKLRELTTIAERLNRLEREWM</sequence>
<accession>Q9RI12</accession>
<accession>O68717</accession>
<gene>
    <name type="primary">ypkA</name>
    <name type="ordered locus">YPCD1.72c</name>
    <name type="ordered locus">y5008</name>
    <name type="ordered locus">y0009</name>
    <name type="ordered locus">YP_pCD13</name>
</gene>
<keyword id="KW-0067">ATP-binding</keyword>
<keyword id="KW-0418">Kinase</keyword>
<keyword id="KW-0547">Nucleotide-binding</keyword>
<keyword id="KW-0614">Plasmid</keyword>
<keyword id="KW-1185">Reference proteome</keyword>
<keyword id="KW-0964">Secreted</keyword>
<keyword id="KW-0723">Serine/threonine-protein kinase</keyword>
<keyword id="KW-0732">Signal</keyword>
<keyword id="KW-0808">Transferase</keyword>
<keyword id="KW-0843">Virulence</keyword>
<organism>
    <name type="scientific">Yersinia pestis</name>
    <dbReference type="NCBI Taxonomy" id="632"/>
    <lineage>
        <taxon>Bacteria</taxon>
        <taxon>Pseudomonadati</taxon>
        <taxon>Pseudomonadota</taxon>
        <taxon>Gammaproteobacteria</taxon>
        <taxon>Enterobacterales</taxon>
        <taxon>Yersiniaceae</taxon>
        <taxon>Yersinia</taxon>
    </lineage>
</organism>
<dbReference type="EC" id="2.7.11.1"/>
<dbReference type="EMBL" id="AF074612">
    <property type="protein sequence ID" value="AAC69765.1"/>
    <property type="molecule type" value="Genomic_DNA"/>
</dbReference>
<dbReference type="EMBL" id="AF053946">
    <property type="protein sequence ID" value="AAC62602.1"/>
    <property type="molecule type" value="Genomic_DNA"/>
</dbReference>
<dbReference type="EMBL" id="AL117189">
    <property type="protein sequence ID" value="CAB54949.1"/>
    <property type="molecule type" value="Genomic_DNA"/>
</dbReference>
<dbReference type="EMBL" id="AE017043">
    <property type="protein sequence ID" value="AAS58532.1"/>
    <property type="molecule type" value="Genomic_DNA"/>
</dbReference>
<dbReference type="PIR" id="T43619">
    <property type="entry name" value="T43619"/>
</dbReference>
<dbReference type="RefSeq" id="NP_395206.1">
    <property type="nucleotide sequence ID" value="NC_003131.1"/>
</dbReference>
<dbReference type="RefSeq" id="NP_857776.1">
    <property type="nucleotide sequence ID" value="NC_004836.1"/>
</dbReference>
<dbReference type="RefSeq" id="NP_857907.1">
    <property type="nucleotide sequence ID" value="NC_004839.1"/>
</dbReference>
<dbReference type="RefSeq" id="WP_002213290.1">
    <property type="nucleotide sequence ID" value="NZ_WHLN01000134.1"/>
</dbReference>
<dbReference type="RefSeq" id="WP_011114033.1">
    <property type="nucleotide sequence ID" value="NZ_WUCM01000117.1"/>
</dbReference>
<dbReference type="SMR" id="Q9RI12"/>
<dbReference type="IntAct" id="Q9RI12">
    <property type="interactions" value="10"/>
</dbReference>
<dbReference type="MINT" id="Q9RI12"/>
<dbReference type="BindingDB" id="Q9RI12"/>
<dbReference type="PaxDb" id="214092-5832492"/>
<dbReference type="DNASU" id="1149271"/>
<dbReference type="EnsemblBacteria" id="AAS58532">
    <property type="protein sequence ID" value="AAS58532"/>
    <property type="gene ID" value="YP_pCD13"/>
</dbReference>
<dbReference type="KEGG" id="ype:YPCD1.72c"/>
<dbReference type="KEGG" id="ypm:YP_pCD13"/>
<dbReference type="PATRIC" id="fig|214092.21.peg.82"/>
<dbReference type="eggNOG" id="COG0515">
    <property type="taxonomic scope" value="Bacteria"/>
</dbReference>
<dbReference type="HOGENOM" id="CLU_402177_0_0_6"/>
<dbReference type="OMA" id="QLDMGVV"/>
<dbReference type="OrthoDB" id="9801841at2"/>
<dbReference type="Proteomes" id="UP000000815">
    <property type="component" value="Plasmid pCD1"/>
</dbReference>
<dbReference type="Proteomes" id="UP000001019">
    <property type="component" value="Plasmid pCD1"/>
</dbReference>
<dbReference type="GO" id="GO:0005737">
    <property type="term" value="C:cytoplasm"/>
    <property type="evidence" value="ECO:0000318"/>
    <property type="project" value="GO_Central"/>
</dbReference>
<dbReference type="GO" id="GO:0005576">
    <property type="term" value="C:extracellular region"/>
    <property type="evidence" value="ECO:0007669"/>
    <property type="project" value="UniProtKB-SubCell"/>
</dbReference>
<dbReference type="GO" id="GO:0005524">
    <property type="term" value="F:ATP binding"/>
    <property type="evidence" value="ECO:0007669"/>
    <property type="project" value="UniProtKB-KW"/>
</dbReference>
<dbReference type="GO" id="GO:0106310">
    <property type="term" value="F:protein serine kinase activity"/>
    <property type="evidence" value="ECO:0007669"/>
    <property type="project" value="RHEA"/>
</dbReference>
<dbReference type="GO" id="GO:0004674">
    <property type="term" value="F:protein serine/threonine kinase activity"/>
    <property type="evidence" value="ECO:0000318"/>
    <property type="project" value="GO_Central"/>
</dbReference>
<dbReference type="Gene3D" id="1.20.58.1230">
    <property type="entry name" value="Rac1-binding domain, C-terminal subdomain"/>
    <property type="match status" value="1"/>
</dbReference>
<dbReference type="Gene3D" id="1.20.120.1330">
    <property type="entry name" value="Rac1-binding domain, N-terminal GTPase binding subdomain"/>
    <property type="match status" value="1"/>
</dbReference>
<dbReference type="Gene3D" id="1.10.510.10">
    <property type="entry name" value="Transferase(Phosphotransferase) domain 1"/>
    <property type="match status" value="1"/>
</dbReference>
<dbReference type="InterPro" id="IPR011009">
    <property type="entry name" value="Kinase-like_dom_sf"/>
</dbReference>
<dbReference type="InterPro" id="IPR000719">
    <property type="entry name" value="Prot_kinase_dom"/>
</dbReference>
<dbReference type="InterPro" id="IPR043119">
    <property type="entry name" value="Rac1-bd_C"/>
</dbReference>
<dbReference type="InterPro" id="IPR019093">
    <property type="entry name" value="Rac1-binding_domain"/>
</dbReference>
<dbReference type="InterPro" id="IPR043120">
    <property type="entry name" value="Rac1-db_N"/>
</dbReference>
<dbReference type="InterPro" id="IPR008271">
    <property type="entry name" value="Ser/Thr_kinase_AS"/>
</dbReference>
<dbReference type="InterPro" id="IPR003547">
    <property type="entry name" value="Ser/thr_kinase_yersinia-type"/>
</dbReference>
<dbReference type="PANTHER" id="PTHR44167">
    <property type="entry name" value="OVARIAN-SPECIFIC SERINE/THREONINE-PROTEIN KINASE LOK-RELATED"/>
    <property type="match status" value="1"/>
</dbReference>
<dbReference type="PANTHER" id="PTHR44167:SF31">
    <property type="entry name" value="PROTEIN CBG02007"/>
    <property type="match status" value="1"/>
</dbReference>
<dbReference type="Pfam" id="PF00069">
    <property type="entry name" value="Pkinase"/>
    <property type="match status" value="1"/>
</dbReference>
<dbReference type="Pfam" id="PF09632">
    <property type="entry name" value="Rac1"/>
    <property type="match status" value="1"/>
</dbReference>
<dbReference type="PRINTS" id="PR01373">
    <property type="entry name" value="YERSSTKINASE"/>
</dbReference>
<dbReference type="SMART" id="SM00220">
    <property type="entry name" value="S_TKc"/>
    <property type="match status" value="1"/>
</dbReference>
<dbReference type="SUPFAM" id="SSF56112">
    <property type="entry name" value="Protein kinase-like (PK-like)"/>
    <property type="match status" value="1"/>
</dbReference>
<dbReference type="PROSITE" id="PS50011">
    <property type="entry name" value="PROTEIN_KINASE_DOM"/>
    <property type="match status" value="1"/>
</dbReference>
<dbReference type="PROSITE" id="PS00108">
    <property type="entry name" value="PROTEIN_KINASE_ST"/>
    <property type="match status" value="1"/>
</dbReference>
<comment type="function">
    <text>Acts as a virulence determinant.</text>
</comment>
<comment type="catalytic activity">
    <reaction>
        <text>L-seryl-[protein] + ATP = O-phospho-L-seryl-[protein] + ADP + H(+)</text>
        <dbReference type="Rhea" id="RHEA:17989"/>
        <dbReference type="Rhea" id="RHEA-COMP:9863"/>
        <dbReference type="Rhea" id="RHEA-COMP:11604"/>
        <dbReference type="ChEBI" id="CHEBI:15378"/>
        <dbReference type="ChEBI" id="CHEBI:29999"/>
        <dbReference type="ChEBI" id="CHEBI:30616"/>
        <dbReference type="ChEBI" id="CHEBI:83421"/>
        <dbReference type="ChEBI" id="CHEBI:456216"/>
        <dbReference type="EC" id="2.7.11.1"/>
    </reaction>
</comment>
<comment type="catalytic activity">
    <reaction>
        <text>L-threonyl-[protein] + ATP = O-phospho-L-threonyl-[protein] + ADP + H(+)</text>
        <dbReference type="Rhea" id="RHEA:46608"/>
        <dbReference type="Rhea" id="RHEA-COMP:11060"/>
        <dbReference type="Rhea" id="RHEA-COMP:11605"/>
        <dbReference type="ChEBI" id="CHEBI:15378"/>
        <dbReference type="ChEBI" id="CHEBI:30013"/>
        <dbReference type="ChEBI" id="CHEBI:30616"/>
        <dbReference type="ChEBI" id="CHEBI:61977"/>
        <dbReference type="ChEBI" id="CHEBI:456216"/>
        <dbReference type="EC" id="2.7.11.1"/>
    </reaction>
</comment>
<comment type="interaction">
    <interactant intactId="EBI-2849107">
        <id>Q9RI12</id>
    </interactant>
    <interactant intactId="EBI-1058491">
        <id>Q96FW1</id>
        <label>OTUB1</label>
    </interactant>
    <organismsDiffer>true</organismsDiffer>
    <experiments>3</experiments>
</comment>
<comment type="interaction">
    <interactant intactId="EBI-2849107">
        <id>Q9RI12</id>
    </interactant>
    <interactant intactId="EBI-748201">
        <id>P50552</id>
        <label>VASP</label>
    </interactant>
    <organismsDiffer>true</organismsDiffer>
    <experiments>4</experiments>
</comment>
<comment type="subcellular location">
    <subcellularLocation>
        <location>Secreted</location>
    </subcellularLocation>
</comment>
<comment type="similarity">
    <text evidence="2">Belongs to the protein kinase superfamily. Ser/Thr protein kinase family.</text>
</comment>